<evidence type="ECO:0000255" key="1">
    <source>
        <dbReference type="PROSITE-ProRule" id="PRU00047"/>
    </source>
</evidence>
<evidence type="ECO:0000255" key="2">
    <source>
        <dbReference type="PROSITE-ProRule" id="PRU00176"/>
    </source>
</evidence>
<evidence type="ECO:0000255" key="3">
    <source>
        <dbReference type="PROSITE-ProRule" id="PRU00768"/>
    </source>
</evidence>
<evidence type="ECO:0000256" key="4">
    <source>
        <dbReference type="SAM" id="MobiDB-lite"/>
    </source>
</evidence>
<evidence type="ECO:0000269" key="5">
    <source>
    </source>
</evidence>
<evidence type="ECO:0000303" key="6">
    <source>
    </source>
</evidence>
<evidence type="ECO:0000305" key="7"/>
<evidence type="ECO:0000312" key="8">
    <source>
        <dbReference type="Araport" id="AT3G55340"/>
    </source>
</evidence>
<evidence type="ECO:0000312" key="9">
    <source>
        <dbReference type="EMBL" id="CAB75768.1"/>
    </source>
</evidence>
<accession>Q9M3B8</accession>
<accession>A0A178VII4</accession>
<accession>Q681R8</accession>
<accession>Q8W2K5</accession>
<feature type="chain" id="PRO_0000452574" description="Phragmoplastin interacting protein 1">
    <location>
        <begin position="1"/>
        <end position="597"/>
    </location>
</feature>
<feature type="domain" description="RRM 1" evidence="2">
    <location>
        <begin position="161"/>
        <end position="238"/>
    </location>
</feature>
<feature type="domain" description="RRM 2" evidence="2">
    <location>
        <begin position="262"/>
        <end position="338"/>
    </location>
</feature>
<feature type="zinc finger region" description="CCHC-type 1" evidence="1">
    <location>
        <begin position="397"/>
        <end position="411"/>
    </location>
</feature>
<feature type="zinc finger region" description="CCHC-type 2" evidence="1">
    <location>
        <begin position="481"/>
        <end position="495"/>
    </location>
</feature>
<feature type="zinc finger region" description="CCHC-type 3" evidence="1">
    <location>
        <begin position="576"/>
        <end position="591"/>
    </location>
</feature>
<feature type="region of interest" description="Disordered" evidence="4">
    <location>
        <begin position="18"/>
        <end position="136"/>
    </location>
</feature>
<feature type="short sequence motif" description="Nuclear localization signal" evidence="3">
    <location>
        <begin position="112"/>
        <end position="119"/>
    </location>
</feature>
<feature type="compositionally biased region" description="Polar residues" evidence="4">
    <location>
        <begin position="20"/>
        <end position="29"/>
    </location>
</feature>
<feature type="compositionally biased region" description="Low complexity" evidence="4">
    <location>
        <begin position="30"/>
        <end position="40"/>
    </location>
</feature>
<feature type="compositionally biased region" description="Basic residues" evidence="4">
    <location>
        <begin position="43"/>
        <end position="53"/>
    </location>
</feature>
<feature type="compositionally biased region" description="Basic residues" evidence="4">
    <location>
        <begin position="112"/>
        <end position="129"/>
    </location>
</feature>
<feature type="sequence conflict" description="In Ref. 1; AAL55607." evidence="7" ref="1">
    <original>E</original>
    <variation>Q</variation>
    <location>
        <position position="138"/>
    </location>
</feature>
<feature type="sequence conflict" description="In Ref. 4; BAD43312." evidence="7" ref="4">
    <original>A</original>
    <variation>V</variation>
    <location>
        <position position="421"/>
    </location>
</feature>
<feature type="sequence conflict" description="In Ref. 1; AAL55607." evidence="7" ref="1">
    <original>T</original>
    <variation>A</variation>
    <location>
        <position position="518"/>
    </location>
</feature>
<sequence>MVLSNKKLKQRIRQDLAESLSVSVSETNPQSQSLKLLLDSSSHKPRLSKREKRRNCETFAREDDEIRENEVGNGGSSEKTDTKIKKKRKRDDAVEVDELEGDEGTKEEQKPQKKKNKKKKKKRKVNKTPKKAEEGNVEEKVKVEEIEVNTDNKEEDGVVPNKLYVGGIPYQSTEDEIRSYFRSCGVIIKVDCKMRPEDGAFSGIAFITFDTEDGAKRALAFDRAAMGDRYLTIQQYVKTTTPSIPRRKTSSGFAPEMVDGYNRVYIGNLAWDTTERDIRKLFSDCVINSVRLGKNKETGEFKGYAHVDFKDSVSVAIALKLDQQVICGRPVKICCALKDRPATDHTPGETNNAGSYNMEDTYAAADPVPALAGRSEVDDGNYFATTVSSSKVKRRVCYECGEKGHLSTACPIKLQKADDQANSKLGQETVDGRPAMQSYGLPKNSGDSYYMNETYASTNETYNGGYSASAVGTGKVKRRNCYECGEKGHLSTACPIKLQNTSHTNSTLDHQTVEAGPTQVTSYSLQKKTRDTENNGGSFMDESYATVPISIDVTNGANDASLTSAVSTGKIKKRNCYECGEKGHLSSACPNKLQKQG</sequence>
<reference key="1">
    <citation type="journal article" date="2008" name="Plant Physiol.">
        <title>A novel RNA-binding protein associated with cell plate formation.</title>
        <authorList>
            <person name="Ma L."/>
            <person name="Xie B."/>
            <person name="Hong Z."/>
            <person name="Verma D.P.S."/>
            <person name="Zhang Z."/>
        </authorList>
    </citation>
    <scope>NUCLEOTIDE SEQUENCE [MRNA]</scope>
    <scope>FUNCTION</scope>
    <scope>INTERACTION WITH PHRAGMOPLASTINS; RAN2 AND ARAC11/ROP1</scope>
    <scope>SUBUNIT</scope>
    <scope>SUBCELLULAR LOCATION</scope>
</reference>
<reference key="2">
    <citation type="journal article" date="2000" name="Nature">
        <title>Sequence and analysis of chromosome 3 of the plant Arabidopsis thaliana.</title>
        <authorList>
            <person name="Salanoubat M."/>
            <person name="Lemcke K."/>
            <person name="Rieger M."/>
            <person name="Ansorge W."/>
            <person name="Unseld M."/>
            <person name="Fartmann B."/>
            <person name="Valle G."/>
            <person name="Bloecker H."/>
            <person name="Perez-Alonso M."/>
            <person name="Obermaier B."/>
            <person name="Delseny M."/>
            <person name="Boutry M."/>
            <person name="Grivell L.A."/>
            <person name="Mache R."/>
            <person name="Puigdomenech P."/>
            <person name="De Simone V."/>
            <person name="Choisne N."/>
            <person name="Artiguenave F."/>
            <person name="Robert C."/>
            <person name="Brottier P."/>
            <person name="Wincker P."/>
            <person name="Cattolico L."/>
            <person name="Weissenbach J."/>
            <person name="Saurin W."/>
            <person name="Quetier F."/>
            <person name="Schaefer M."/>
            <person name="Mueller-Auer S."/>
            <person name="Gabel C."/>
            <person name="Fuchs M."/>
            <person name="Benes V."/>
            <person name="Wurmbach E."/>
            <person name="Drzonek H."/>
            <person name="Erfle H."/>
            <person name="Jordan N."/>
            <person name="Bangert S."/>
            <person name="Wiedelmann R."/>
            <person name="Kranz H."/>
            <person name="Voss H."/>
            <person name="Holland R."/>
            <person name="Brandt P."/>
            <person name="Nyakatura G."/>
            <person name="Vezzi A."/>
            <person name="D'Angelo M."/>
            <person name="Pallavicini A."/>
            <person name="Toppo S."/>
            <person name="Simionati B."/>
            <person name="Conrad A."/>
            <person name="Hornischer K."/>
            <person name="Kauer G."/>
            <person name="Loehnert T.-H."/>
            <person name="Nordsiek G."/>
            <person name="Reichelt J."/>
            <person name="Scharfe M."/>
            <person name="Schoen O."/>
            <person name="Bargues M."/>
            <person name="Terol J."/>
            <person name="Climent J."/>
            <person name="Navarro P."/>
            <person name="Collado C."/>
            <person name="Perez-Perez A."/>
            <person name="Ottenwaelder B."/>
            <person name="Duchemin D."/>
            <person name="Cooke R."/>
            <person name="Laudie M."/>
            <person name="Berger-Llauro C."/>
            <person name="Purnelle B."/>
            <person name="Masuy D."/>
            <person name="de Haan M."/>
            <person name="Maarse A.C."/>
            <person name="Alcaraz J.-P."/>
            <person name="Cottet A."/>
            <person name="Casacuberta E."/>
            <person name="Monfort A."/>
            <person name="Argiriou A."/>
            <person name="Flores M."/>
            <person name="Liguori R."/>
            <person name="Vitale D."/>
            <person name="Mannhaupt G."/>
            <person name="Haase D."/>
            <person name="Schoof H."/>
            <person name="Rudd S."/>
            <person name="Zaccaria P."/>
            <person name="Mewes H.-W."/>
            <person name="Mayer K.F.X."/>
            <person name="Kaul S."/>
            <person name="Town C.D."/>
            <person name="Koo H.L."/>
            <person name="Tallon L.J."/>
            <person name="Jenkins J."/>
            <person name="Rooney T."/>
            <person name="Rizzo M."/>
            <person name="Walts A."/>
            <person name="Utterback T."/>
            <person name="Fujii C.Y."/>
            <person name="Shea T.P."/>
            <person name="Creasy T.H."/>
            <person name="Haas B."/>
            <person name="Maiti R."/>
            <person name="Wu D."/>
            <person name="Peterson J."/>
            <person name="Van Aken S."/>
            <person name="Pai G."/>
            <person name="Militscher J."/>
            <person name="Sellers P."/>
            <person name="Gill J.E."/>
            <person name="Feldblyum T.V."/>
            <person name="Preuss D."/>
            <person name="Lin X."/>
            <person name="Nierman W.C."/>
            <person name="Salzberg S.L."/>
            <person name="White O."/>
            <person name="Venter J.C."/>
            <person name="Fraser C.M."/>
            <person name="Kaneko T."/>
            <person name="Nakamura Y."/>
            <person name="Sato S."/>
            <person name="Kato T."/>
            <person name="Asamizu E."/>
            <person name="Sasamoto S."/>
            <person name="Kimura T."/>
            <person name="Idesawa K."/>
            <person name="Kawashima K."/>
            <person name="Kishida Y."/>
            <person name="Kiyokawa C."/>
            <person name="Kohara M."/>
            <person name="Matsumoto M."/>
            <person name="Matsuno A."/>
            <person name="Muraki A."/>
            <person name="Nakayama S."/>
            <person name="Nakazaki N."/>
            <person name="Shinpo S."/>
            <person name="Takeuchi C."/>
            <person name="Wada T."/>
            <person name="Watanabe A."/>
            <person name="Yamada M."/>
            <person name="Yasuda M."/>
            <person name="Tabata S."/>
        </authorList>
    </citation>
    <scope>NUCLEOTIDE SEQUENCE [LARGE SCALE GENOMIC DNA]</scope>
    <source>
        <strain>cv. Columbia</strain>
    </source>
</reference>
<reference key="3">
    <citation type="journal article" date="2017" name="Plant J.">
        <title>Araport11: a complete reannotation of the Arabidopsis thaliana reference genome.</title>
        <authorList>
            <person name="Cheng C.Y."/>
            <person name="Krishnakumar V."/>
            <person name="Chan A.P."/>
            <person name="Thibaud-Nissen F."/>
            <person name="Schobel S."/>
            <person name="Town C.D."/>
        </authorList>
    </citation>
    <scope>GENOME REANNOTATION</scope>
    <source>
        <strain>cv. Columbia</strain>
    </source>
</reference>
<reference key="4">
    <citation type="submission" date="2004-09" db="EMBL/GenBank/DDBJ databases">
        <title>Large-scale analysis of RIKEN Arabidopsis full-length (RAFL) cDNAs.</title>
        <authorList>
            <person name="Totoki Y."/>
            <person name="Seki M."/>
            <person name="Ishida J."/>
            <person name="Nakajima M."/>
            <person name="Enju A."/>
            <person name="Kamiya A."/>
            <person name="Narusaka M."/>
            <person name="Shin-i T."/>
            <person name="Nakagawa M."/>
            <person name="Sakamoto N."/>
            <person name="Oishi K."/>
            <person name="Kohara Y."/>
            <person name="Kobayashi M."/>
            <person name="Toyoda A."/>
            <person name="Sakaki Y."/>
            <person name="Sakurai T."/>
            <person name="Iida K."/>
            <person name="Akiyama K."/>
            <person name="Satou M."/>
            <person name="Toyoda T."/>
            <person name="Konagaya A."/>
            <person name="Carninci P."/>
            <person name="Kawai J."/>
            <person name="Hayashizaki Y."/>
            <person name="Shinozaki K."/>
        </authorList>
    </citation>
    <scope>NUCLEOTIDE SEQUENCE [LARGE SCALE MRNA]</scope>
    <source>
        <strain>cv. Columbia</strain>
    </source>
</reference>
<dbReference type="EMBL" id="AF196776">
    <property type="protein sequence ID" value="AAL55607.1"/>
    <property type="status" value="ALT_FRAME"/>
    <property type="molecule type" value="mRNA"/>
</dbReference>
<dbReference type="EMBL" id="AL132954">
    <property type="protein sequence ID" value="CAB75768.1"/>
    <property type="molecule type" value="Genomic_DNA"/>
</dbReference>
<dbReference type="EMBL" id="CP002686">
    <property type="protein sequence ID" value="AEE79370.1"/>
    <property type="molecule type" value="Genomic_DNA"/>
</dbReference>
<dbReference type="EMBL" id="AK175549">
    <property type="protein sequence ID" value="BAD43312.1"/>
    <property type="molecule type" value="mRNA"/>
</dbReference>
<dbReference type="PIR" id="T47673">
    <property type="entry name" value="T47673"/>
</dbReference>
<dbReference type="RefSeq" id="NP_191094.1">
    <property type="nucleotide sequence ID" value="NM_115392.4"/>
</dbReference>
<dbReference type="SMR" id="Q9M3B8"/>
<dbReference type="FunCoup" id="Q9M3B8">
    <property type="interactions" value="799"/>
</dbReference>
<dbReference type="STRING" id="3702.Q9M3B8"/>
<dbReference type="PaxDb" id="3702-AT3G55340.1"/>
<dbReference type="ProteomicsDB" id="183203"/>
<dbReference type="EnsemblPlants" id="AT3G55340.1">
    <property type="protein sequence ID" value="AT3G55340.1"/>
    <property type="gene ID" value="AT3G55340"/>
</dbReference>
<dbReference type="GeneID" id="824700"/>
<dbReference type="Gramene" id="AT3G55340.1">
    <property type="protein sequence ID" value="AT3G55340.1"/>
    <property type="gene ID" value="AT3G55340"/>
</dbReference>
<dbReference type="KEGG" id="ath:AT3G55340"/>
<dbReference type="Araport" id="AT3G55340"/>
<dbReference type="TAIR" id="AT3G55340">
    <property type="gene designation" value="PHIP1"/>
</dbReference>
<dbReference type="eggNOG" id="KOG0118">
    <property type="taxonomic scope" value="Eukaryota"/>
</dbReference>
<dbReference type="HOGENOM" id="CLU_424151_0_0_1"/>
<dbReference type="InParanoid" id="Q9M3B8"/>
<dbReference type="OMA" id="CAVPKKG"/>
<dbReference type="PhylomeDB" id="Q9M3B8"/>
<dbReference type="CD-CODE" id="4299E36E">
    <property type="entry name" value="Nucleolus"/>
</dbReference>
<dbReference type="PRO" id="PR:Q9M3B8"/>
<dbReference type="Proteomes" id="UP000006548">
    <property type="component" value="Chromosome 3"/>
</dbReference>
<dbReference type="ExpressionAtlas" id="Q9M3B8">
    <property type="expression patterns" value="baseline and differential"/>
</dbReference>
<dbReference type="GO" id="GO:0005856">
    <property type="term" value="C:cytoskeleton"/>
    <property type="evidence" value="ECO:0007669"/>
    <property type="project" value="UniProtKB-KW"/>
</dbReference>
<dbReference type="GO" id="GO:0019898">
    <property type="term" value="C:extrinsic component of membrane"/>
    <property type="evidence" value="ECO:0000314"/>
    <property type="project" value="TAIR"/>
</dbReference>
<dbReference type="GO" id="GO:0005634">
    <property type="term" value="C:nucleus"/>
    <property type="evidence" value="ECO:0007669"/>
    <property type="project" value="UniProtKB-SubCell"/>
</dbReference>
<dbReference type="GO" id="GO:0009524">
    <property type="term" value="C:phragmoplast"/>
    <property type="evidence" value="ECO:0000314"/>
    <property type="project" value="UniProtKB"/>
</dbReference>
<dbReference type="GO" id="GO:0005886">
    <property type="term" value="C:plasma membrane"/>
    <property type="evidence" value="ECO:0007669"/>
    <property type="project" value="UniProtKB-SubCell"/>
</dbReference>
<dbReference type="GO" id="GO:0003729">
    <property type="term" value="F:mRNA binding"/>
    <property type="evidence" value="ECO:0000353"/>
    <property type="project" value="TAIR"/>
</dbReference>
<dbReference type="GO" id="GO:0008270">
    <property type="term" value="F:zinc ion binding"/>
    <property type="evidence" value="ECO:0007669"/>
    <property type="project" value="UniProtKB-KW"/>
</dbReference>
<dbReference type="GO" id="GO:0009920">
    <property type="term" value="P:cell plate formation involved in plant-type cell wall biogenesis"/>
    <property type="evidence" value="ECO:0000314"/>
    <property type="project" value="TAIR"/>
</dbReference>
<dbReference type="GO" id="GO:0000914">
    <property type="term" value="P:phragmoplast assembly"/>
    <property type="evidence" value="ECO:0000314"/>
    <property type="project" value="UniProtKB"/>
</dbReference>
<dbReference type="CDD" id="cd12271">
    <property type="entry name" value="RRM1_PHIP1"/>
    <property type="match status" value="1"/>
</dbReference>
<dbReference type="CDD" id="cd12272">
    <property type="entry name" value="RRM2_PHIP1"/>
    <property type="match status" value="1"/>
</dbReference>
<dbReference type="FunFam" id="4.10.60.10:FF:000129">
    <property type="entry name" value="Phragmoplastin interacting protein 1"/>
    <property type="match status" value="1"/>
</dbReference>
<dbReference type="Gene3D" id="3.30.70.330">
    <property type="match status" value="2"/>
</dbReference>
<dbReference type="Gene3D" id="4.10.60.10">
    <property type="entry name" value="Zinc finger, CCHC-type"/>
    <property type="match status" value="3"/>
</dbReference>
<dbReference type="InterPro" id="IPR012677">
    <property type="entry name" value="Nucleotide-bd_a/b_plait_sf"/>
</dbReference>
<dbReference type="InterPro" id="IPR034361">
    <property type="entry name" value="PHIP1_RRM1"/>
</dbReference>
<dbReference type="InterPro" id="IPR034362">
    <property type="entry name" value="PHIP1_RRM2"/>
</dbReference>
<dbReference type="InterPro" id="IPR035979">
    <property type="entry name" value="RBD_domain_sf"/>
</dbReference>
<dbReference type="InterPro" id="IPR000504">
    <property type="entry name" value="RRM_dom"/>
</dbReference>
<dbReference type="InterPro" id="IPR001878">
    <property type="entry name" value="Znf_CCHC"/>
</dbReference>
<dbReference type="InterPro" id="IPR036875">
    <property type="entry name" value="Znf_CCHC_sf"/>
</dbReference>
<dbReference type="PANTHER" id="PTHR23236">
    <property type="entry name" value="EUKARYOTIC TRANSLATION INITIATION FACTOR 4B/4H"/>
    <property type="match status" value="1"/>
</dbReference>
<dbReference type="PANTHER" id="PTHR23236:SF119">
    <property type="entry name" value="NUCLEAR RNA-BINDING PROTEIN SART-3"/>
    <property type="match status" value="1"/>
</dbReference>
<dbReference type="Pfam" id="PF00076">
    <property type="entry name" value="RRM_1"/>
    <property type="match status" value="2"/>
</dbReference>
<dbReference type="Pfam" id="PF00098">
    <property type="entry name" value="zf-CCHC"/>
    <property type="match status" value="3"/>
</dbReference>
<dbReference type="SMART" id="SM00360">
    <property type="entry name" value="RRM"/>
    <property type="match status" value="2"/>
</dbReference>
<dbReference type="SMART" id="SM00343">
    <property type="entry name" value="ZnF_C2HC"/>
    <property type="match status" value="3"/>
</dbReference>
<dbReference type="SUPFAM" id="SSF57756">
    <property type="entry name" value="Retrovirus zinc finger-like domains"/>
    <property type="match status" value="3"/>
</dbReference>
<dbReference type="SUPFAM" id="SSF54928">
    <property type="entry name" value="RNA-binding domain, RBD"/>
    <property type="match status" value="2"/>
</dbReference>
<dbReference type="PROSITE" id="PS50102">
    <property type="entry name" value="RRM"/>
    <property type="match status" value="2"/>
</dbReference>
<dbReference type="PROSITE" id="PS50158">
    <property type="entry name" value="ZF_CCHC"/>
    <property type="match status" value="3"/>
</dbReference>
<organism>
    <name type="scientific">Arabidopsis thaliana</name>
    <name type="common">Mouse-ear cress</name>
    <dbReference type="NCBI Taxonomy" id="3702"/>
    <lineage>
        <taxon>Eukaryota</taxon>
        <taxon>Viridiplantae</taxon>
        <taxon>Streptophyta</taxon>
        <taxon>Embryophyta</taxon>
        <taxon>Tracheophyta</taxon>
        <taxon>Spermatophyta</taxon>
        <taxon>Magnoliopsida</taxon>
        <taxon>eudicotyledons</taxon>
        <taxon>Gunneridae</taxon>
        <taxon>Pentapetalae</taxon>
        <taxon>rosids</taxon>
        <taxon>malvids</taxon>
        <taxon>Brassicales</taxon>
        <taxon>Brassicaceae</taxon>
        <taxon>Camelineae</taxon>
        <taxon>Arabidopsis</taxon>
    </lineage>
</organism>
<name>PHIP1_ARATH</name>
<keyword id="KW-1003">Cell membrane</keyword>
<keyword id="KW-0963">Cytoplasm</keyword>
<keyword id="KW-0206">Cytoskeleton</keyword>
<keyword id="KW-0472">Membrane</keyword>
<keyword id="KW-0479">Metal-binding</keyword>
<keyword id="KW-0539">Nucleus</keyword>
<keyword id="KW-1185">Reference proteome</keyword>
<keyword id="KW-0677">Repeat</keyword>
<keyword id="KW-0694">RNA-binding</keyword>
<keyword id="KW-0862">Zinc</keyword>
<keyword id="KW-0863">Zinc-finger</keyword>
<gene>
    <name evidence="6" type="primary">PHIP1</name>
    <name evidence="8" type="ordered locus">At3g55340</name>
    <name evidence="9" type="ORF">T26I12.220</name>
</gene>
<comment type="function">
    <text evidence="5">RNA-binding protein which mediates polarized mRNA (e.g. Ran2 transcripts mRNA) transport from the nucleus to the vicinity of the cell plate during cytokinesis and phragmoplast formation.</text>
</comment>
<comment type="subunit">
    <text evidence="5">Interacts with phragmoplastins (e.g. DRP1A, DRP1B, DRP1C, DRP1D and DRP1E) and with GTP-bound ARAC11/ROP1 as well as with Ran2 transcripts.</text>
</comment>
<comment type="subcellular location">
    <subcellularLocation>
        <location evidence="3">Nucleus</location>
    </subcellularLocation>
    <subcellularLocation>
        <location evidence="5">Cell membrane</location>
        <topology evidence="5">Peripheral membrane protein</topology>
    </subcellularLocation>
    <subcellularLocation>
        <location evidence="5">Cytoplasm</location>
        <location evidence="5">Cytoskeleton</location>
        <location evidence="5">Phragmoplast</location>
    </subcellularLocation>
    <text evidence="5">Associates with the forming cell plate during cytokinesis; may shuttle between the nucleus and the forming cell plate.</text>
</comment>
<comment type="sequence caution" evidence="7">
    <conflict type="frameshift">
        <sequence resource="EMBL-CDS" id="AAL55607"/>
    </conflict>
</comment>
<proteinExistence type="evidence at protein level"/>
<protein>
    <recommendedName>
        <fullName evidence="6">Phragmoplastin interacting protein 1</fullName>
    </recommendedName>
</protein>